<proteinExistence type="evidence at transcript level"/>
<feature type="chain" id="PRO_0000165993" description="Uricase">
    <location>
        <begin position="1" status="less than"/>
        <end position="339"/>
    </location>
</feature>
<feature type="short sequence motif" description="Microbody targeting signal" evidence="3">
    <location>
        <begin position="337"/>
        <end position="339"/>
    </location>
</feature>
<feature type="active site" description="Charge relay system" evidence="1">
    <location>
        <position position="33"/>
    </location>
</feature>
<feature type="active site" description="Charge relay system" evidence="1">
    <location>
        <position position="78"/>
    </location>
</feature>
<feature type="active site" description="Charge relay system" evidence="1">
    <location>
        <position position="295"/>
    </location>
</feature>
<feature type="binding site" evidence="2">
    <location>
        <position position="78"/>
    </location>
    <ligand>
        <name>urate</name>
        <dbReference type="ChEBI" id="CHEBI:17775"/>
    </ligand>
</feature>
<feature type="binding site" evidence="2">
    <location>
        <position position="79"/>
    </location>
    <ligand>
        <name>urate</name>
        <dbReference type="ChEBI" id="CHEBI:17775"/>
    </ligand>
</feature>
<feature type="binding site" evidence="2">
    <location>
        <position position="201"/>
    </location>
    <ligand>
        <name>urate</name>
        <dbReference type="ChEBI" id="CHEBI:17775"/>
    </ligand>
</feature>
<feature type="binding site" evidence="2">
    <location>
        <position position="218"/>
    </location>
    <ligand>
        <name>urate</name>
        <dbReference type="ChEBI" id="CHEBI:17775"/>
    </ligand>
</feature>
<feature type="binding site" evidence="2">
    <location>
        <position position="266"/>
    </location>
    <ligand>
        <name>urate</name>
        <dbReference type="ChEBI" id="CHEBI:17775"/>
    </ligand>
</feature>
<feature type="binding site" evidence="2">
    <location>
        <position position="267"/>
    </location>
    <ligand>
        <name>urate</name>
        <dbReference type="ChEBI" id="CHEBI:17775"/>
    </ligand>
</feature>
<feature type="binding site" evidence="2">
    <location>
        <position position="293"/>
    </location>
    <ligand>
        <name>urate</name>
        <dbReference type="ChEBI" id="CHEBI:17775"/>
    </ligand>
</feature>
<feature type="non-terminal residue">
    <location>
        <position position="1"/>
    </location>
</feature>
<comment type="function">
    <text>Catalyzes the oxidation of uric acid to 5-hydroxyisourate, which is further processed to form (S)-allantoin.</text>
</comment>
<comment type="catalytic activity">
    <reaction>
        <text>urate + O2 + H2O = 5-hydroxyisourate + H2O2</text>
        <dbReference type="Rhea" id="RHEA:21368"/>
        <dbReference type="ChEBI" id="CHEBI:15377"/>
        <dbReference type="ChEBI" id="CHEBI:15379"/>
        <dbReference type="ChEBI" id="CHEBI:16240"/>
        <dbReference type="ChEBI" id="CHEBI:17775"/>
        <dbReference type="ChEBI" id="CHEBI:18072"/>
        <dbReference type="EC" id="1.7.3.3"/>
    </reaction>
</comment>
<comment type="pathway">
    <text>Purine metabolism; urate degradation; (S)-allantoin from urate: step 1/3.</text>
</comment>
<comment type="subcellular location">
    <subcellularLocation>
        <location>Peroxisome</location>
    </subcellularLocation>
</comment>
<comment type="developmental stage">
    <text>Third instar larvae and adult.</text>
</comment>
<comment type="similarity">
    <text evidence="4">Belongs to the uricase family.</text>
</comment>
<dbReference type="EC" id="1.7.3.3"/>
<dbReference type="EMBL" id="AF025816">
    <property type="protein sequence ID" value="AAB87901.1"/>
    <property type="molecule type" value="mRNA"/>
</dbReference>
<dbReference type="UniPathway" id="UPA00394">
    <property type="reaction ID" value="UER00650"/>
</dbReference>
<dbReference type="GO" id="GO:0005777">
    <property type="term" value="C:peroxisome"/>
    <property type="evidence" value="ECO:0007669"/>
    <property type="project" value="UniProtKB-SubCell"/>
</dbReference>
<dbReference type="GO" id="GO:0004846">
    <property type="term" value="F:urate oxidase activity"/>
    <property type="evidence" value="ECO:0007669"/>
    <property type="project" value="UniProtKB-EC"/>
</dbReference>
<dbReference type="GO" id="GO:0006145">
    <property type="term" value="P:purine nucleobase catabolic process"/>
    <property type="evidence" value="ECO:0007669"/>
    <property type="project" value="TreeGrafter"/>
</dbReference>
<dbReference type="GO" id="GO:0019628">
    <property type="term" value="P:urate catabolic process"/>
    <property type="evidence" value="ECO:0007669"/>
    <property type="project" value="UniProtKB-UniPathway"/>
</dbReference>
<dbReference type="CDD" id="cd00445">
    <property type="entry name" value="Uricase"/>
    <property type="match status" value="1"/>
</dbReference>
<dbReference type="FunFam" id="3.10.270.10:FF:000002">
    <property type="entry name" value="Uricase"/>
    <property type="match status" value="1"/>
</dbReference>
<dbReference type="Gene3D" id="3.10.270.10">
    <property type="entry name" value="Urate Oxidase"/>
    <property type="match status" value="1"/>
</dbReference>
<dbReference type="InterPro" id="IPR002042">
    <property type="entry name" value="Uricase"/>
</dbReference>
<dbReference type="NCBIfam" id="TIGR03383">
    <property type="entry name" value="urate_oxi"/>
    <property type="match status" value="1"/>
</dbReference>
<dbReference type="PANTHER" id="PTHR42874">
    <property type="entry name" value="URICASE"/>
    <property type="match status" value="1"/>
</dbReference>
<dbReference type="PANTHER" id="PTHR42874:SF1">
    <property type="entry name" value="URICASE"/>
    <property type="match status" value="1"/>
</dbReference>
<dbReference type="Pfam" id="PF01014">
    <property type="entry name" value="Uricase"/>
    <property type="match status" value="2"/>
</dbReference>
<dbReference type="PIRSF" id="PIRSF000241">
    <property type="entry name" value="Urate_oxidase"/>
    <property type="match status" value="1"/>
</dbReference>
<dbReference type="PRINTS" id="PR00093">
    <property type="entry name" value="URICASE"/>
</dbReference>
<dbReference type="SUPFAM" id="SSF55620">
    <property type="entry name" value="Tetrahydrobiopterin biosynthesis enzymes-like"/>
    <property type="match status" value="2"/>
</dbReference>
<dbReference type="PROSITE" id="PS00366">
    <property type="entry name" value="URICASE"/>
    <property type="match status" value="1"/>
</dbReference>
<organism>
    <name type="scientific">Drosophila subobscura</name>
    <name type="common">Fruit fly</name>
    <dbReference type="NCBI Taxonomy" id="7241"/>
    <lineage>
        <taxon>Eukaryota</taxon>
        <taxon>Metazoa</taxon>
        <taxon>Ecdysozoa</taxon>
        <taxon>Arthropoda</taxon>
        <taxon>Hexapoda</taxon>
        <taxon>Insecta</taxon>
        <taxon>Pterygota</taxon>
        <taxon>Neoptera</taxon>
        <taxon>Endopterygota</taxon>
        <taxon>Diptera</taxon>
        <taxon>Brachycera</taxon>
        <taxon>Muscomorpha</taxon>
        <taxon>Ephydroidea</taxon>
        <taxon>Drosophilidae</taxon>
        <taxon>Drosophila</taxon>
        <taxon>Sophophora</taxon>
    </lineage>
</organism>
<name>URIC_DROSU</name>
<evidence type="ECO:0000250" key="1">
    <source>
        <dbReference type="UniProtKB" id="D0VWQ1"/>
    </source>
</evidence>
<evidence type="ECO:0000250" key="2">
    <source>
        <dbReference type="UniProtKB" id="Q00511"/>
    </source>
</evidence>
<evidence type="ECO:0000255" key="3"/>
<evidence type="ECO:0000305" key="4"/>
<reference key="1">
    <citation type="journal article" date="1998" name="Genetica">
        <title>The molecular clock revisited: the rate of synonymous vs. replacement change in Drosophila.</title>
        <authorList>
            <person name="Zeng L.-W."/>
            <person name="Comeron J.M."/>
            <person name="Chen B."/>
            <person name="Kreitman M."/>
        </authorList>
    </citation>
    <scope>NUCLEOTIDE SEQUENCE [MRNA]</scope>
</reference>
<accession>O44111</accession>
<keyword id="KW-0560">Oxidoreductase</keyword>
<keyword id="KW-0576">Peroxisome</keyword>
<keyword id="KW-0659">Purine metabolism</keyword>
<protein>
    <recommendedName>
        <fullName>Uricase</fullName>
        <ecNumber>1.7.3.3</ecNumber>
    </recommendedName>
    <alternativeName>
        <fullName>Urate oxidase</fullName>
    </alternativeName>
</protein>
<gene>
    <name type="primary">Uro</name>
    <name type="synonym">UO</name>
</gene>
<sequence>LRQPSSASNRTAASLDGQETPFQYEITDHGYGKDAVKVLHVSRKGPVHTIQEFEVGTHLKLYSKKDYYQGNNSDIVATDSQKNTVYLLAKKYGIESPEKFALLLGQHFLNKYSHVEEAHVHVETYPWQRVCQEETKASTTVGQGSCNFSSIDNRSLHNHAFIFTPTALHYCDVVIXRQDPKQTVITGIKGLRVLKTTQSSFVNFVNDEXRSLPDQYDRIFSTVVDCSWEYSDTDTVNFSRAWQQVKNIILRNFAGDPQVGVSSPSVQHTLYLSEKQVLDVIPQVSVISMTMPNKHYFNFDTKPFQQIVPGDNNEVFIPVDKPHGTIYAQLARKNLNSHL</sequence>